<protein>
    <recommendedName>
        <fullName evidence="1">Acireductone dioxygenase 2</fullName>
    </recommendedName>
    <alternativeName>
        <fullName evidence="1">1,2-dihydroxy-3-keto-5-methylthiopentene dioxygenase 2</fullName>
        <shortName evidence="1">DHK-MTPene dioxygenase 2</shortName>
    </alternativeName>
    <alternativeName>
        <fullName evidence="1">Acireductone dioxygenase (Fe(2+)-requiring) 2</fullName>
        <shortName evidence="1">ARD' 2</shortName>
        <shortName evidence="1">Fe-ARD 2</shortName>
        <ecNumber evidence="1">1.13.11.54</ecNumber>
    </alternativeName>
    <alternativeName>
        <fullName evidence="1">Acireductone dioxygenase (Ni(2+)-requiring) 2</fullName>
        <shortName evidence="1">ARD 2</shortName>
        <shortName evidence="1">Ni-ARD 2</shortName>
        <ecNumber evidence="1">1.13.11.53</ecNumber>
    </alternativeName>
</protein>
<dbReference type="EC" id="1.13.11.54" evidence="1"/>
<dbReference type="EC" id="1.13.11.53" evidence="1"/>
<dbReference type="EMBL" id="AP006618">
    <property type="protein sequence ID" value="BAD59396.1"/>
    <property type="molecule type" value="Genomic_DNA"/>
</dbReference>
<dbReference type="RefSeq" id="WP_011211080.1">
    <property type="nucleotide sequence ID" value="NC_006361.1"/>
</dbReference>
<dbReference type="SMR" id="Q5YQZ5"/>
<dbReference type="STRING" id="247156.NFA_45450"/>
<dbReference type="GeneID" id="61135152"/>
<dbReference type="KEGG" id="nfa:NFA_45450"/>
<dbReference type="eggNOG" id="COG1791">
    <property type="taxonomic scope" value="Bacteria"/>
</dbReference>
<dbReference type="HOGENOM" id="CLU_125400_0_0_11"/>
<dbReference type="OrthoDB" id="9795636at2"/>
<dbReference type="UniPathway" id="UPA00904">
    <property type="reaction ID" value="UER00878"/>
</dbReference>
<dbReference type="Proteomes" id="UP000006820">
    <property type="component" value="Chromosome"/>
</dbReference>
<dbReference type="GO" id="GO:0010308">
    <property type="term" value="F:acireductone dioxygenase (Ni2+-requiring) activity"/>
    <property type="evidence" value="ECO:0007669"/>
    <property type="project" value="UniProtKB-UniRule"/>
</dbReference>
<dbReference type="GO" id="GO:0010309">
    <property type="term" value="F:acireductone dioxygenase [iron(II)-requiring] activity"/>
    <property type="evidence" value="ECO:0007669"/>
    <property type="project" value="UniProtKB-UniRule"/>
</dbReference>
<dbReference type="GO" id="GO:0005506">
    <property type="term" value="F:iron ion binding"/>
    <property type="evidence" value="ECO:0007669"/>
    <property type="project" value="UniProtKB-UniRule"/>
</dbReference>
<dbReference type="GO" id="GO:0016151">
    <property type="term" value="F:nickel cation binding"/>
    <property type="evidence" value="ECO:0007669"/>
    <property type="project" value="UniProtKB-UniRule"/>
</dbReference>
<dbReference type="GO" id="GO:0019509">
    <property type="term" value="P:L-methionine salvage from methylthioadenosine"/>
    <property type="evidence" value="ECO:0007669"/>
    <property type="project" value="UniProtKB-UniRule"/>
</dbReference>
<dbReference type="GO" id="GO:0019284">
    <property type="term" value="P:L-methionine salvage from S-adenosylmethionine"/>
    <property type="evidence" value="ECO:0007669"/>
    <property type="project" value="InterPro"/>
</dbReference>
<dbReference type="CDD" id="cd02232">
    <property type="entry name" value="cupin_ARD"/>
    <property type="match status" value="1"/>
</dbReference>
<dbReference type="Gene3D" id="2.60.120.10">
    <property type="entry name" value="Jelly Rolls"/>
    <property type="match status" value="1"/>
</dbReference>
<dbReference type="HAMAP" id="MF_01682">
    <property type="entry name" value="Salvage_MtnD"/>
    <property type="match status" value="1"/>
</dbReference>
<dbReference type="InterPro" id="IPR004313">
    <property type="entry name" value="ARD"/>
</dbReference>
<dbReference type="InterPro" id="IPR023956">
    <property type="entry name" value="ARD_bac"/>
</dbReference>
<dbReference type="InterPro" id="IPR014710">
    <property type="entry name" value="RmlC-like_jellyroll"/>
</dbReference>
<dbReference type="InterPro" id="IPR011051">
    <property type="entry name" value="RmlC_Cupin_sf"/>
</dbReference>
<dbReference type="PANTHER" id="PTHR23418">
    <property type="entry name" value="ACIREDUCTONE DIOXYGENASE"/>
    <property type="match status" value="1"/>
</dbReference>
<dbReference type="PANTHER" id="PTHR23418:SF0">
    <property type="entry name" value="ACIREDUCTONE DIOXYGENASE"/>
    <property type="match status" value="1"/>
</dbReference>
<dbReference type="Pfam" id="PF03079">
    <property type="entry name" value="ARD"/>
    <property type="match status" value="1"/>
</dbReference>
<dbReference type="SUPFAM" id="SSF51182">
    <property type="entry name" value="RmlC-like cupins"/>
    <property type="match status" value="1"/>
</dbReference>
<organism>
    <name type="scientific">Nocardia farcinica (strain IFM 10152)</name>
    <dbReference type="NCBI Taxonomy" id="247156"/>
    <lineage>
        <taxon>Bacteria</taxon>
        <taxon>Bacillati</taxon>
        <taxon>Actinomycetota</taxon>
        <taxon>Actinomycetes</taxon>
        <taxon>Mycobacteriales</taxon>
        <taxon>Nocardiaceae</taxon>
        <taxon>Nocardia</taxon>
    </lineage>
</organism>
<name>MTND2_NOCFA</name>
<proteinExistence type="inferred from homology"/>
<sequence>MTLLQVMAADDAARVRLRTTEEAAIAAELAAHGITFDRWPVLDDAAALSSDDLLAHYADRIAALNADGRYRHIDVARIHPDDADPQWPQTARAARTKFLDEHRHAEDEVRFFAAGRGCFYLHLGAEVLAVVCEGGDLMSVPAGTLHWFDMGERPDFIAVRFFEEADGWVGDFTGDRISAGFPTLDDLLTAP</sequence>
<feature type="chain" id="PRO_0000359213" description="Acireductone dioxygenase 2">
    <location>
        <begin position="1"/>
        <end position="191"/>
    </location>
</feature>
<feature type="binding site" evidence="1">
    <location>
        <position position="102"/>
    </location>
    <ligand>
        <name>Fe(2+)</name>
        <dbReference type="ChEBI" id="CHEBI:29033"/>
    </ligand>
</feature>
<feature type="binding site" evidence="1">
    <location>
        <position position="102"/>
    </location>
    <ligand>
        <name>Ni(2+)</name>
        <dbReference type="ChEBI" id="CHEBI:49786"/>
    </ligand>
</feature>
<feature type="binding site" evidence="1">
    <location>
        <position position="104"/>
    </location>
    <ligand>
        <name>Fe(2+)</name>
        <dbReference type="ChEBI" id="CHEBI:29033"/>
    </ligand>
</feature>
<feature type="binding site" evidence="1">
    <location>
        <position position="104"/>
    </location>
    <ligand>
        <name>Ni(2+)</name>
        <dbReference type="ChEBI" id="CHEBI:49786"/>
    </ligand>
</feature>
<feature type="binding site" evidence="1">
    <location>
        <position position="108"/>
    </location>
    <ligand>
        <name>Fe(2+)</name>
        <dbReference type="ChEBI" id="CHEBI:29033"/>
    </ligand>
</feature>
<feature type="binding site" evidence="1">
    <location>
        <position position="108"/>
    </location>
    <ligand>
        <name>Ni(2+)</name>
        <dbReference type="ChEBI" id="CHEBI:49786"/>
    </ligand>
</feature>
<feature type="binding site" evidence="1">
    <location>
        <position position="146"/>
    </location>
    <ligand>
        <name>Fe(2+)</name>
        <dbReference type="ChEBI" id="CHEBI:29033"/>
    </ligand>
</feature>
<feature type="binding site" evidence="1">
    <location>
        <position position="146"/>
    </location>
    <ligand>
        <name>Ni(2+)</name>
        <dbReference type="ChEBI" id="CHEBI:49786"/>
    </ligand>
</feature>
<feature type="site" description="May play a role in metal incorporation in vivo" evidence="1">
    <location>
        <position position="101"/>
    </location>
</feature>
<feature type="site" description="May play a role in transmitting local conformational changes" evidence="1">
    <location>
        <position position="107"/>
    </location>
</feature>
<feature type="site" description="Important to generate the dianion" evidence="1">
    <location>
        <position position="110"/>
    </location>
</feature>
<comment type="function">
    <text evidence="1">Catalyzes 2 different reactions between oxygen and the acireductone 1,2-dihydroxy-3-keto-5-methylthiopentene (DHK-MTPene) depending upon the metal bound in the active site. Fe-containing acireductone dioxygenase (Fe-ARD) produces formate and 2-keto-4-methylthiobutyrate (KMTB), the alpha-ketoacid precursor of methionine in the methionine recycle pathway. Ni-containing acireductone dioxygenase (Ni-ARD) produces methylthiopropionate, carbon monoxide and formate, and does not lie on the methionine recycle pathway.</text>
</comment>
<comment type="catalytic activity">
    <reaction evidence="1">
        <text>1,2-dihydroxy-5-(methylsulfanyl)pent-1-en-3-one + O2 = 3-(methylsulfanyl)propanoate + CO + formate + 2 H(+)</text>
        <dbReference type="Rhea" id="RHEA:14161"/>
        <dbReference type="ChEBI" id="CHEBI:15378"/>
        <dbReference type="ChEBI" id="CHEBI:15379"/>
        <dbReference type="ChEBI" id="CHEBI:15740"/>
        <dbReference type="ChEBI" id="CHEBI:17245"/>
        <dbReference type="ChEBI" id="CHEBI:49016"/>
        <dbReference type="ChEBI" id="CHEBI:49252"/>
        <dbReference type="EC" id="1.13.11.53"/>
    </reaction>
</comment>
<comment type="catalytic activity">
    <reaction evidence="1">
        <text>1,2-dihydroxy-5-(methylsulfanyl)pent-1-en-3-one + O2 = 4-methylsulfanyl-2-oxobutanoate + formate + 2 H(+)</text>
        <dbReference type="Rhea" id="RHEA:24504"/>
        <dbReference type="ChEBI" id="CHEBI:15378"/>
        <dbReference type="ChEBI" id="CHEBI:15379"/>
        <dbReference type="ChEBI" id="CHEBI:15740"/>
        <dbReference type="ChEBI" id="CHEBI:16723"/>
        <dbReference type="ChEBI" id="CHEBI:49252"/>
        <dbReference type="EC" id="1.13.11.54"/>
    </reaction>
</comment>
<comment type="cofactor">
    <cofactor evidence="1">
        <name>Fe(2+)</name>
        <dbReference type="ChEBI" id="CHEBI:29033"/>
    </cofactor>
    <text evidence="1">Binds 1 Fe(2+) cation per monomer.</text>
</comment>
<comment type="cofactor">
    <cofactor evidence="1">
        <name>Ni(2+)</name>
        <dbReference type="ChEBI" id="CHEBI:49786"/>
    </cofactor>
    <text evidence="1">Binds 1 nickel ion per monomer.</text>
</comment>
<comment type="pathway">
    <text evidence="1">Amino-acid biosynthesis; L-methionine biosynthesis via salvage pathway; L-methionine from S-methyl-5-thio-alpha-D-ribose 1-phosphate: step 5/6.</text>
</comment>
<comment type="subunit">
    <text evidence="1">Monomer.</text>
</comment>
<comment type="similarity">
    <text evidence="1">Belongs to the acireductone dioxygenase (ARD) family.</text>
</comment>
<keyword id="KW-0028">Amino-acid biosynthesis</keyword>
<keyword id="KW-0223">Dioxygenase</keyword>
<keyword id="KW-0408">Iron</keyword>
<keyword id="KW-0479">Metal-binding</keyword>
<keyword id="KW-0486">Methionine biosynthesis</keyword>
<keyword id="KW-0533">Nickel</keyword>
<keyword id="KW-0560">Oxidoreductase</keyword>
<keyword id="KW-1185">Reference proteome</keyword>
<reference key="1">
    <citation type="journal article" date="2004" name="Proc. Natl. Acad. Sci. U.S.A.">
        <title>The complete genomic sequence of Nocardia farcinica IFM 10152.</title>
        <authorList>
            <person name="Ishikawa J."/>
            <person name="Yamashita A."/>
            <person name="Mikami Y."/>
            <person name="Hoshino Y."/>
            <person name="Kurita H."/>
            <person name="Hotta K."/>
            <person name="Shiba T."/>
            <person name="Hattori M."/>
        </authorList>
    </citation>
    <scope>NUCLEOTIDE SEQUENCE [LARGE SCALE GENOMIC DNA]</scope>
    <source>
        <strain>IFM 10152</strain>
    </source>
</reference>
<evidence type="ECO:0000255" key="1">
    <source>
        <dbReference type="HAMAP-Rule" id="MF_01682"/>
    </source>
</evidence>
<accession>Q5YQZ5</accession>
<gene>
    <name evidence="1" type="primary">mtnD2</name>
    <name type="ordered locus">NFA_45450</name>
</gene>